<evidence type="ECO:0000255" key="1">
    <source>
        <dbReference type="HAMAP-Rule" id="MF_00251"/>
    </source>
</evidence>
<evidence type="ECO:0000305" key="2"/>
<gene>
    <name evidence="1" type="primary">rpmJ2</name>
    <name type="ordered locus">YPO3135</name>
    <name type="ordered locus">y1047.1</name>
    <name type="ordered locus">YP_0796</name>
</gene>
<organism>
    <name type="scientific">Yersinia pestis</name>
    <dbReference type="NCBI Taxonomy" id="632"/>
    <lineage>
        <taxon>Bacteria</taxon>
        <taxon>Pseudomonadati</taxon>
        <taxon>Pseudomonadota</taxon>
        <taxon>Gammaproteobacteria</taxon>
        <taxon>Enterobacterales</taxon>
        <taxon>Yersiniaceae</taxon>
        <taxon>Yersinia</taxon>
    </lineage>
</organism>
<reference key="1">
    <citation type="journal article" date="2001" name="Nature">
        <title>Genome sequence of Yersinia pestis, the causative agent of plague.</title>
        <authorList>
            <person name="Parkhill J."/>
            <person name="Wren B.W."/>
            <person name="Thomson N.R."/>
            <person name="Titball R.W."/>
            <person name="Holden M.T.G."/>
            <person name="Prentice M.B."/>
            <person name="Sebaihia M."/>
            <person name="James K.D."/>
            <person name="Churcher C.M."/>
            <person name="Mungall K.L."/>
            <person name="Baker S."/>
            <person name="Basham D."/>
            <person name="Bentley S.D."/>
            <person name="Brooks K."/>
            <person name="Cerdeno-Tarraga A.-M."/>
            <person name="Chillingworth T."/>
            <person name="Cronin A."/>
            <person name="Davies R.M."/>
            <person name="Davis P."/>
            <person name="Dougan G."/>
            <person name="Feltwell T."/>
            <person name="Hamlin N."/>
            <person name="Holroyd S."/>
            <person name="Jagels K."/>
            <person name="Karlyshev A.V."/>
            <person name="Leather S."/>
            <person name="Moule S."/>
            <person name="Oyston P.C.F."/>
            <person name="Quail M.A."/>
            <person name="Rutherford K.M."/>
            <person name="Simmonds M."/>
            <person name="Skelton J."/>
            <person name="Stevens K."/>
            <person name="Whitehead S."/>
            <person name="Barrell B.G."/>
        </authorList>
    </citation>
    <scope>NUCLEOTIDE SEQUENCE [LARGE SCALE GENOMIC DNA]</scope>
    <source>
        <strain>CO-92 / Biovar Orientalis</strain>
    </source>
</reference>
<reference key="2">
    <citation type="journal article" date="2002" name="J. Bacteriol.">
        <title>Genome sequence of Yersinia pestis KIM.</title>
        <authorList>
            <person name="Deng W."/>
            <person name="Burland V."/>
            <person name="Plunkett G. III"/>
            <person name="Boutin A."/>
            <person name="Mayhew G.F."/>
            <person name="Liss P."/>
            <person name="Perna N.T."/>
            <person name="Rose D.J."/>
            <person name="Mau B."/>
            <person name="Zhou S."/>
            <person name="Schwartz D.C."/>
            <person name="Fetherston J.D."/>
            <person name="Lindler L.E."/>
            <person name="Brubaker R.R."/>
            <person name="Plano G.V."/>
            <person name="Straley S.C."/>
            <person name="McDonough K.A."/>
            <person name="Nilles M.L."/>
            <person name="Matson J.S."/>
            <person name="Blattner F.R."/>
            <person name="Perry R.D."/>
        </authorList>
    </citation>
    <scope>NUCLEOTIDE SEQUENCE [LARGE SCALE GENOMIC DNA]</scope>
    <source>
        <strain>KIM10+ / Biovar Mediaevalis</strain>
    </source>
</reference>
<reference key="3">
    <citation type="journal article" date="2004" name="DNA Res.">
        <title>Complete genome sequence of Yersinia pestis strain 91001, an isolate avirulent to humans.</title>
        <authorList>
            <person name="Song Y."/>
            <person name="Tong Z."/>
            <person name="Wang J."/>
            <person name="Wang L."/>
            <person name="Guo Z."/>
            <person name="Han Y."/>
            <person name="Zhang J."/>
            <person name="Pei D."/>
            <person name="Zhou D."/>
            <person name="Qin H."/>
            <person name="Pang X."/>
            <person name="Han Y."/>
            <person name="Zhai J."/>
            <person name="Li M."/>
            <person name="Cui B."/>
            <person name="Qi Z."/>
            <person name="Jin L."/>
            <person name="Dai R."/>
            <person name="Chen F."/>
            <person name="Li S."/>
            <person name="Ye C."/>
            <person name="Du Z."/>
            <person name="Lin W."/>
            <person name="Wang J."/>
            <person name="Yu J."/>
            <person name="Yang H."/>
            <person name="Wang J."/>
            <person name="Huang P."/>
            <person name="Yang R."/>
        </authorList>
    </citation>
    <scope>NUCLEOTIDE SEQUENCE [LARGE SCALE GENOMIC DNA]</scope>
    <source>
        <strain>91001 / Biovar Mediaevalis</strain>
    </source>
</reference>
<feature type="chain" id="PRO_0000126303" description="Large ribosomal subunit protein bL36B">
    <location>
        <begin position="1"/>
        <end position="47"/>
    </location>
</feature>
<keyword id="KW-1185">Reference proteome</keyword>
<keyword id="KW-0687">Ribonucleoprotein</keyword>
<keyword id="KW-0689">Ribosomal protein</keyword>
<name>RL362_YERPE</name>
<protein>
    <recommendedName>
        <fullName evidence="1">Large ribosomal subunit protein bL36B</fullName>
    </recommendedName>
    <alternativeName>
        <fullName evidence="2">50S ribosomal protein L36 2</fullName>
    </alternativeName>
</protein>
<comment type="similarity">
    <text evidence="1">Belongs to the bacterial ribosomal protein bL36 family.</text>
</comment>
<sequence length="47" mass="5463">MQVLSSLRSAKNRHPDCKIVRRRGRVYVICKSNPRFKAVQGGTHKKR</sequence>
<proteinExistence type="inferred from homology"/>
<accession>Q8ZC86</accession>
<accession>Q0WCE8</accession>
<dbReference type="EMBL" id="AL590842">
    <property type="protein sequence ID" value="CAL21730.1"/>
    <property type="molecule type" value="Genomic_DNA"/>
</dbReference>
<dbReference type="EMBL" id="AE009952">
    <property type="status" value="NOT_ANNOTATED_CDS"/>
    <property type="molecule type" value="Genomic_DNA"/>
</dbReference>
<dbReference type="EMBL" id="AE017042">
    <property type="protein sequence ID" value="AAS61061.1"/>
    <property type="molecule type" value="Genomic_DNA"/>
</dbReference>
<dbReference type="PIR" id="AG0380">
    <property type="entry name" value="AG0380"/>
</dbReference>
<dbReference type="RefSeq" id="YP_002348040.1">
    <property type="nucleotide sequence ID" value="NC_003143.1"/>
</dbReference>
<dbReference type="SMR" id="Q8ZC86"/>
<dbReference type="STRING" id="214092.YPO3135"/>
<dbReference type="PaxDb" id="214092-YPO3135"/>
<dbReference type="EnsemblBacteria" id="AAS61061">
    <property type="protein sequence ID" value="AAS61061"/>
    <property type="gene ID" value="YP_0796"/>
</dbReference>
<dbReference type="KEGG" id="ype:YPO3135"/>
<dbReference type="KEGG" id="ypm:YP_0796"/>
<dbReference type="PATRIC" id="fig|214092.21.peg.3592"/>
<dbReference type="eggNOG" id="COG0257">
    <property type="taxonomic scope" value="Bacteria"/>
</dbReference>
<dbReference type="HOGENOM" id="CLU_135723_3_2_6"/>
<dbReference type="OrthoDB" id="9801558at2"/>
<dbReference type="Proteomes" id="UP000000815">
    <property type="component" value="Chromosome"/>
</dbReference>
<dbReference type="Proteomes" id="UP000001019">
    <property type="component" value="Chromosome"/>
</dbReference>
<dbReference type="Proteomes" id="UP000002490">
    <property type="component" value="Chromosome"/>
</dbReference>
<dbReference type="GO" id="GO:1990904">
    <property type="term" value="C:ribonucleoprotein complex"/>
    <property type="evidence" value="ECO:0007669"/>
    <property type="project" value="UniProtKB-KW"/>
</dbReference>
<dbReference type="GO" id="GO:0005840">
    <property type="term" value="C:ribosome"/>
    <property type="evidence" value="ECO:0007669"/>
    <property type="project" value="UniProtKB-KW"/>
</dbReference>
<dbReference type="GO" id="GO:0003735">
    <property type="term" value="F:structural constituent of ribosome"/>
    <property type="evidence" value="ECO:0007669"/>
    <property type="project" value="InterPro"/>
</dbReference>
<dbReference type="GO" id="GO:0006412">
    <property type="term" value="P:translation"/>
    <property type="evidence" value="ECO:0007669"/>
    <property type="project" value="UniProtKB-UniRule"/>
</dbReference>
<dbReference type="HAMAP" id="MF_00251">
    <property type="entry name" value="Ribosomal_bL36"/>
    <property type="match status" value="1"/>
</dbReference>
<dbReference type="InterPro" id="IPR000473">
    <property type="entry name" value="Ribosomal_bL36"/>
</dbReference>
<dbReference type="InterPro" id="IPR035977">
    <property type="entry name" value="Ribosomal_bL36_sp"/>
</dbReference>
<dbReference type="InterPro" id="IPR047621">
    <property type="entry name" value="Ribosomal_L36_bact"/>
</dbReference>
<dbReference type="NCBIfam" id="NF002021">
    <property type="entry name" value="PRK00831.1"/>
    <property type="match status" value="1"/>
</dbReference>
<dbReference type="NCBIfam" id="TIGR01022">
    <property type="entry name" value="rpmJ_bact"/>
    <property type="match status" value="1"/>
</dbReference>
<dbReference type="PANTHER" id="PTHR47781">
    <property type="entry name" value="50S RIBOSOMAL PROTEIN L36 2"/>
    <property type="match status" value="1"/>
</dbReference>
<dbReference type="PANTHER" id="PTHR47781:SF1">
    <property type="entry name" value="LARGE RIBOSOMAL SUBUNIT PROTEIN BL36B"/>
    <property type="match status" value="1"/>
</dbReference>
<dbReference type="Pfam" id="PF00444">
    <property type="entry name" value="Ribosomal_L36"/>
    <property type="match status" value="1"/>
</dbReference>
<dbReference type="SUPFAM" id="SSF57840">
    <property type="entry name" value="Ribosomal protein L36"/>
    <property type="match status" value="1"/>
</dbReference>
<dbReference type="PROSITE" id="PS00828">
    <property type="entry name" value="RIBOSOMAL_L36"/>
    <property type="match status" value="1"/>
</dbReference>